<dbReference type="EMBL" id="CP000774">
    <property type="protein sequence ID" value="ABS62860.1"/>
    <property type="molecule type" value="Genomic_DNA"/>
</dbReference>
<dbReference type="RefSeq" id="WP_012110128.1">
    <property type="nucleotide sequence ID" value="NC_009719.1"/>
</dbReference>
<dbReference type="SMR" id="A7HSH7"/>
<dbReference type="STRING" id="402881.Plav_1240"/>
<dbReference type="KEGG" id="pla:Plav_1240"/>
<dbReference type="eggNOG" id="COG1220">
    <property type="taxonomic scope" value="Bacteria"/>
</dbReference>
<dbReference type="HOGENOM" id="CLU_033123_0_0_5"/>
<dbReference type="OrthoDB" id="9804062at2"/>
<dbReference type="Proteomes" id="UP000006377">
    <property type="component" value="Chromosome"/>
</dbReference>
<dbReference type="GO" id="GO:0009376">
    <property type="term" value="C:HslUV protease complex"/>
    <property type="evidence" value="ECO:0007669"/>
    <property type="project" value="UniProtKB-UniRule"/>
</dbReference>
<dbReference type="GO" id="GO:0005524">
    <property type="term" value="F:ATP binding"/>
    <property type="evidence" value="ECO:0007669"/>
    <property type="project" value="UniProtKB-UniRule"/>
</dbReference>
<dbReference type="GO" id="GO:0016887">
    <property type="term" value="F:ATP hydrolysis activity"/>
    <property type="evidence" value="ECO:0007669"/>
    <property type="project" value="InterPro"/>
</dbReference>
<dbReference type="GO" id="GO:0008233">
    <property type="term" value="F:peptidase activity"/>
    <property type="evidence" value="ECO:0007669"/>
    <property type="project" value="InterPro"/>
</dbReference>
<dbReference type="GO" id="GO:0036402">
    <property type="term" value="F:proteasome-activating activity"/>
    <property type="evidence" value="ECO:0007669"/>
    <property type="project" value="UniProtKB-UniRule"/>
</dbReference>
<dbReference type="GO" id="GO:0043335">
    <property type="term" value="P:protein unfolding"/>
    <property type="evidence" value="ECO:0007669"/>
    <property type="project" value="UniProtKB-UniRule"/>
</dbReference>
<dbReference type="GO" id="GO:0051603">
    <property type="term" value="P:proteolysis involved in protein catabolic process"/>
    <property type="evidence" value="ECO:0007669"/>
    <property type="project" value="TreeGrafter"/>
</dbReference>
<dbReference type="CDD" id="cd19498">
    <property type="entry name" value="RecA-like_HslU"/>
    <property type="match status" value="1"/>
</dbReference>
<dbReference type="FunFam" id="3.40.50.300:FF:000213">
    <property type="entry name" value="ATP-dependent protease ATPase subunit HslU"/>
    <property type="match status" value="1"/>
</dbReference>
<dbReference type="FunFam" id="3.40.50.300:FF:000220">
    <property type="entry name" value="ATP-dependent protease ATPase subunit HslU"/>
    <property type="match status" value="1"/>
</dbReference>
<dbReference type="Gene3D" id="1.10.8.60">
    <property type="match status" value="1"/>
</dbReference>
<dbReference type="Gene3D" id="3.40.50.300">
    <property type="entry name" value="P-loop containing nucleotide triphosphate hydrolases"/>
    <property type="match status" value="2"/>
</dbReference>
<dbReference type="HAMAP" id="MF_00249">
    <property type="entry name" value="HslU"/>
    <property type="match status" value="1"/>
</dbReference>
<dbReference type="InterPro" id="IPR003593">
    <property type="entry name" value="AAA+_ATPase"/>
</dbReference>
<dbReference type="InterPro" id="IPR050052">
    <property type="entry name" value="ATP-dep_Clp_protease_ClpX"/>
</dbReference>
<dbReference type="InterPro" id="IPR003959">
    <property type="entry name" value="ATPase_AAA_core"/>
</dbReference>
<dbReference type="InterPro" id="IPR019489">
    <property type="entry name" value="Clp_ATPase_C"/>
</dbReference>
<dbReference type="InterPro" id="IPR004491">
    <property type="entry name" value="HslU"/>
</dbReference>
<dbReference type="InterPro" id="IPR027417">
    <property type="entry name" value="P-loop_NTPase"/>
</dbReference>
<dbReference type="NCBIfam" id="TIGR00390">
    <property type="entry name" value="hslU"/>
    <property type="match status" value="1"/>
</dbReference>
<dbReference type="NCBIfam" id="NF003544">
    <property type="entry name" value="PRK05201.1"/>
    <property type="match status" value="1"/>
</dbReference>
<dbReference type="PANTHER" id="PTHR48102">
    <property type="entry name" value="ATP-DEPENDENT CLP PROTEASE ATP-BINDING SUBUNIT CLPX-LIKE, MITOCHONDRIAL-RELATED"/>
    <property type="match status" value="1"/>
</dbReference>
<dbReference type="PANTHER" id="PTHR48102:SF3">
    <property type="entry name" value="ATP-DEPENDENT PROTEASE ATPASE SUBUNIT HSLU"/>
    <property type="match status" value="1"/>
</dbReference>
<dbReference type="Pfam" id="PF00004">
    <property type="entry name" value="AAA"/>
    <property type="match status" value="1"/>
</dbReference>
<dbReference type="Pfam" id="PF07724">
    <property type="entry name" value="AAA_2"/>
    <property type="match status" value="1"/>
</dbReference>
<dbReference type="SMART" id="SM00382">
    <property type="entry name" value="AAA"/>
    <property type="match status" value="1"/>
</dbReference>
<dbReference type="SMART" id="SM01086">
    <property type="entry name" value="ClpB_D2-small"/>
    <property type="match status" value="1"/>
</dbReference>
<dbReference type="SUPFAM" id="SSF52540">
    <property type="entry name" value="P-loop containing nucleoside triphosphate hydrolases"/>
    <property type="match status" value="1"/>
</dbReference>
<feature type="chain" id="PRO_1000071854" description="ATP-dependent protease ATPase subunit HslU">
    <location>
        <begin position="1"/>
        <end position="435"/>
    </location>
</feature>
<feature type="binding site" evidence="1">
    <location>
        <position position="18"/>
    </location>
    <ligand>
        <name>ATP</name>
        <dbReference type="ChEBI" id="CHEBI:30616"/>
    </ligand>
</feature>
<feature type="binding site" evidence="1">
    <location>
        <begin position="60"/>
        <end position="65"/>
    </location>
    <ligand>
        <name>ATP</name>
        <dbReference type="ChEBI" id="CHEBI:30616"/>
    </ligand>
</feature>
<feature type="binding site" evidence="1">
    <location>
        <position position="248"/>
    </location>
    <ligand>
        <name>ATP</name>
        <dbReference type="ChEBI" id="CHEBI:30616"/>
    </ligand>
</feature>
<feature type="binding site" evidence="1">
    <location>
        <position position="313"/>
    </location>
    <ligand>
        <name>ATP</name>
        <dbReference type="ChEBI" id="CHEBI:30616"/>
    </ligand>
</feature>
<feature type="binding site" evidence="1">
    <location>
        <position position="385"/>
    </location>
    <ligand>
        <name>ATP</name>
        <dbReference type="ChEBI" id="CHEBI:30616"/>
    </ligand>
</feature>
<protein>
    <recommendedName>
        <fullName evidence="1">ATP-dependent protease ATPase subunit HslU</fullName>
    </recommendedName>
    <alternativeName>
        <fullName evidence="1">Unfoldase HslU</fullName>
    </alternativeName>
</protein>
<proteinExistence type="inferred from homology"/>
<sequence length="435" mass="48056">MTSFSPREIVSELDRYIVGQRDAKRAVAIALRNRWRRQQLPDALRDEVLPKNILMIGPTGVGKTEISRRLAKLAEAPFLKVEATKFTEVGYVGRDVEQIIRDLVEIALAMTRERKRKDVQAKAHVAAEGRVLDALVGANASEATRESFRRKLRDGELDEKEIEVEVADSGGGMPTFDIPGMPGSQMGMINLSDIMGKAFGGRTKTRRMAVRDSYDVLVAEESDKLLDQEQLTQEAIRSVENNGIVFLDEIDKICARAERQGGDVSREGVQRDLLPLIEGTTVATKHGAVKTDHILFIASGAFHIAKPSDLLPELQGRLPIRVELQALSKDDMRRVLTEPEASLIKQYVALLNTENVTLDFTDDGIDAIADIATSVNSTVENIGARRLHTVMERVLDEVSFAATDKAGETVTIDGAYVRKHLGDLSKNTDLSKFIL</sequence>
<accession>A7HSH7</accession>
<reference key="1">
    <citation type="journal article" date="2011" name="Stand. Genomic Sci.">
        <title>Complete genome sequence of Parvibaculum lavamentivorans type strain (DS-1(T)).</title>
        <authorList>
            <person name="Schleheck D."/>
            <person name="Weiss M."/>
            <person name="Pitluck S."/>
            <person name="Bruce D."/>
            <person name="Land M.L."/>
            <person name="Han S."/>
            <person name="Saunders E."/>
            <person name="Tapia R."/>
            <person name="Detter C."/>
            <person name="Brettin T."/>
            <person name="Han J."/>
            <person name="Woyke T."/>
            <person name="Goodwin L."/>
            <person name="Pennacchio L."/>
            <person name="Nolan M."/>
            <person name="Cook A.M."/>
            <person name="Kjelleberg S."/>
            <person name="Thomas T."/>
        </authorList>
    </citation>
    <scope>NUCLEOTIDE SEQUENCE [LARGE SCALE GENOMIC DNA]</scope>
    <source>
        <strain>DS-1 / DSM 13023 / NCIMB 13966</strain>
    </source>
</reference>
<evidence type="ECO:0000255" key="1">
    <source>
        <dbReference type="HAMAP-Rule" id="MF_00249"/>
    </source>
</evidence>
<organism>
    <name type="scientific">Parvibaculum lavamentivorans (strain DS-1 / DSM 13023 / NCIMB 13966)</name>
    <dbReference type="NCBI Taxonomy" id="402881"/>
    <lineage>
        <taxon>Bacteria</taxon>
        <taxon>Pseudomonadati</taxon>
        <taxon>Pseudomonadota</taxon>
        <taxon>Alphaproteobacteria</taxon>
        <taxon>Hyphomicrobiales</taxon>
        <taxon>Parvibaculaceae</taxon>
        <taxon>Parvibaculum</taxon>
    </lineage>
</organism>
<name>HSLU_PARL1</name>
<gene>
    <name evidence="1" type="primary">hslU</name>
    <name type="ordered locus">Plav_1240</name>
</gene>
<keyword id="KW-0067">ATP-binding</keyword>
<keyword id="KW-0143">Chaperone</keyword>
<keyword id="KW-0963">Cytoplasm</keyword>
<keyword id="KW-0547">Nucleotide-binding</keyword>
<keyword id="KW-1185">Reference proteome</keyword>
<keyword id="KW-0346">Stress response</keyword>
<comment type="function">
    <text evidence="1">ATPase subunit of a proteasome-like degradation complex; this subunit has chaperone activity. The binding of ATP and its subsequent hydrolysis by HslU are essential for unfolding of protein substrates subsequently hydrolyzed by HslV. HslU recognizes the N-terminal part of its protein substrates and unfolds these before they are guided to HslV for hydrolysis.</text>
</comment>
<comment type="subunit">
    <text evidence="1">A double ring-shaped homohexamer of HslV is capped on each side by a ring-shaped HslU homohexamer. The assembly of the HslU/HslV complex is dependent on binding of ATP.</text>
</comment>
<comment type="subcellular location">
    <subcellularLocation>
        <location evidence="1">Cytoplasm</location>
    </subcellularLocation>
</comment>
<comment type="similarity">
    <text evidence="1">Belongs to the ClpX chaperone family. HslU subfamily.</text>
</comment>